<keyword id="KW-0025">Alternative splicing</keyword>
<keyword id="KW-0053">Apoptosis</keyword>
<keyword id="KW-0967">Endosome</keyword>
<keyword id="KW-0458">Lysosome</keyword>
<keyword id="KW-0472">Membrane</keyword>
<keyword id="KW-0479">Metal-binding</keyword>
<keyword id="KW-1185">Reference proteome</keyword>
<keyword id="KW-0862">Zinc</keyword>
<proteinExistence type="evidence at transcript level"/>
<comment type="function">
    <text evidence="2">Acts as an important p53/TP53-apoptotic effector. Regulates TNF-alpha-mediated apoptosis in a p53/TP53-dependent manner.</text>
</comment>
<comment type="subcellular location">
    <subcellularLocation>
        <location evidence="2">Late endosome membrane</location>
        <topology evidence="2">Peripheral membrane protein</topology>
        <orientation evidence="2">Cytoplasmic side</orientation>
    </subcellularLocation>
    <subcellularLocation>
        <location evidence="2">Lysosome membrane</location>
        <topology evidence="2">Peripheral membrane protein</topology>
        <orientation evidence="2">Cytoplasmic side</orientation>
    </subcellularLocation>
</comment>
<comment type="alternative products">
    <event type="alternative splicing"/>
    <isoform>
        <id>Q58D45-1</id>
        <name>1</name>
        <sequence type="displayed"/>
    </isoform>
    <isoform>
        <id>Q58D45-2</id>
        <name>2</name>
        <sequence type="described" ref="VSP_023631"/>
    </isoform>
</comment>
<comment type="domain">
    <text evidence="1">The LITAF domain is stabilized by a bound zinc ion. The LITAF domain contains an amphipathic helix that mediates interaction with lipid membranes.</text>
</comment>
<comment type="similarity">
    <text evidence="6">Belongs to the CDIP1/LITAF family.</text>
</comment>
<feature type="chain" id="PRO_0000280335" description="Cell death-inducing p53-target protein 1">
    <location>
        <begin position="1"/>
        <end position="208"/>
    </location>
</feature>
<feature type="domain" description="LITAF" evidence="3">
    <location>
        <begin position="122"/>
        <end position="206"/>
    </location>
</feature>
<feature type="region of interest" description="Disordered" evidence="4">
    <location>
        <begin position="1"/>
        <end position="65"/>
    </location>
</feature>
<feature type="region of interest" description="Membrane-binding amphipathic helix" evidence="6">
    <location>
        <begin position="164"/>
        <end position="184"/>
    </location>
</feature>
<feature type="compositionally biased region" description="Pro residues" evidence="4">
    <location>
        <begin position="1"/>
        <end position="13"/>
    </location>
</feature>
<feature type="compositionally biased region" description="Pro residues" evidence="4">
    <location>
        <begin position="36"/>
        <end position="65"/>
    </location>
</feature>
<feature type="binding site" evidence="1">
    <location>
        <position position="142"/>
    </location>
    <ligand>
        <name>Zn(2+)</name>
        <dbReference type="ChEBI" id="CHEBI:29105"/>
    </ligand>
</feature>
<feature type="binding site" evidence="1">
    <location>
        <position position="145"/>
    </location>
    <ligand>
        <name>Zn(2+)</name>
        <dbReference type="ChEBI" id="CHEBI:29105"/>
    </ligand>
</feature>
<feature type="binding site" evidence="1">
    <location>
        <position position="194"/>
    </location>
    <ligand>
        <name>Zn(2+)</name>
        <dbReference type="ChEBI" id="CHEBI:29105"/>
    </ligand>
</feature>
<feature type="binding site" evidence="1">
    <location>
        <position position="197"/>
    </location>
    <ligand>
        <name>Zn(2+)</name>
        <dbReference type="ChEBI" id="CHEBI:29105"/>
    </ligand>
</feature>
<feature type="splice variant" id="VSP_023631" description="In isoform 2." evidence="5">
    <original>CDLGCCLIPCLINDFKDVTHTCPSCKAYIYTYKRLC</original>
    <variation>PPSLLMQV</variation>
    <location>
        <begin position="173"/>
        <end position="208"/>
    </location>
</feature>
<protein>
    <recommendedName>
        <fullName>Cell death-inducing p53-target protein 1</fullName>
    </recommendedName>
    <alternativeName>
        <fullName>LITAF-like protein</fullName>
    </alternativeName>
</protein>
<dbReference type="EMBL" id="BT021752">
    <property type="protein sequence ID" value="AAX46599.1"/>
    <property type="molecule type" value="mRNA"/>
</dbReference>
<dbReference type="EMBL" id="BC102294">
    <property type="protein sequence ID" value="AAI02295.1"/>
    <property type="molecule type" value="mRNA"/>
</dbReference>
<dbReference type="RefSeq" id="NP_001014892.1">
    <molecule id="Q58D45-1"/>
    <property type="nucleotide sequence ID" value="NM_001014892.1"/>
</dbReference>
<dbReference type="RefSeq" id="XP_005224477.1">
    <molecule id="Q58D45-1"/>
    <property type="nucleotide sequence ID" value="XM_005224420.4"/>
</dbReference>
<dbReference type="FunCoup" id="Q58D45">
    <property type="interactions" value="673"/>
</dbReference>
<dbReference type="STRING" id="9913.ENSBTAP00000060751"/>
<dbReference type="PaxDb" id="9913-ENSBTAP00000037343"/>
<dbReference type="Ensembl" id="ENSBTAT00000037513.6">
    <molecule id="Q58D45-1"/>
    <property type="protein sequence ID" value="ENSBTAP00000037343.6"/>
    <property type="gene ID" value="ENSBTAG00000018938.7"/>
</dbReference>
<dbReference type="GeneID" id="510242"/>
<dbReference type="KEGG" id="bta:510242"/>
<dbReference type="CTD" id="29965"/>
<dbReference type="VEuPathDB" id="HostDB:ENSBTAG00000018938"/>
<dbReference type="eggNOG" id="ENOG502S2GM">
    <property type="taxonomic scope" value="Eukaryota"/>
</dbReference>
<dbReference type="GeneTree" id="ENSGT00940000157696"/>
<dbReference type="HOGENOM" id="CLU_095549_0_0_1"/>
<dbReference type="InParanoid" id="Q58D45"/>
<dbReference type="OMA" id="YTYKRVC"/>
<dbReference type="OrthoDB" id="5599753at2759"/>
<dbReference type="TreeFam" id="TF313294"/>
<dbReference type="Proteomes" id="UP000009136">
    <property type="component" value="Chromosome 25"/>
</dbReference>
<dbReference type="Bgee" id="ENSBTAG00000018938">
    <property type="expression patterns" value="Expressed in temporal cortex and 104 other cell types or tissues"/>
</dbReference>
<dbReference type="GO" id="GO:0098560">
    <property type="term" value="C:cytoplasmic side of late endosome membrane"/>
    <property type="evidence" value="ECO:0000250"/>
    <property type="project" value="UniProtKB"/>
</dbReference>
<dbReference type="GO" id="GO:0098574">
    <property type="term" value="C:cytoplasmic side of lysosomal membrane"/>
    <property type="evidence" value="ECO:0000250"/>
    <property type="project" value="UniProtKB"/>
</dbReference>
<dbReference type="GO" id="GO:0005634">
    <property type="term" value="C:nucleus"/>
    <property type="evidence" value="ECO:0000318"/>
    <property type="project" value="GO_Central"/>
</dbReference>
<dbReference type="GO" id="GO:0008270">
    <property type="term" value="F:zinc ion binding"/>
    <property type="evidence" value="ECO:0000318"/>
    <property type="project" value="GO_Central"/>
</dbReference>
<dbReference type="GO" id="GO:0042771">
    <property type="term" value="P:intrinsic apoptotic signaling pathway in response to DNA damage by p53 class mediator"/>
    <property type="evidence" value="ECO:0000318"/>
    <property type="project" value="GO_Central"/>
</dbReference>
<dbReference type="InterPro" id="IPR006629">
    <property type="entry name" value="LITAF"/>
</dbReference>
<dbReference type="InterPro" id="IPR037519">
    <property type="entry name" value="LITAF_fam"/>
</dbReference>
<dbReference type="PANTHER" id="PTHR23292:SF7">
    <property type="entry name" value="CELL DEATH-INDUCING P53-TARGET PROTEIN 1"/>
    <property type="match status" value="1"/>
</dbReference>
<dbReference type="PANTHER" id="PTHR23292">
    <property type="entry name" value="LIPOPOLYSACCHARIDE-INDUCED TUMOR NECROSIS FACTOR-ALPHA FACTOR"/>
    <property type="match status" value="1"/>
</dbReference>
<dbReference type="Pfam" id="PF10601">
    <property type="entry name" value="zf-LITAF-like"/>
    <property type="match status" value="1"/>
</dbReference>
<dbReference type="SMART" id="SM00714">
    <property type="entry name" value="LITAF"/>
    <property type="match status" value="1"/>
</dbReference>
<dbReference type="PROSITE" id="PS51837">
    <property type="entry name" value="LITAF"/>
    <property type="match status" value="1"/>
</dbReference>
<evidence type="ECO:0000250" key="1">
    <source>
        <dbReference type="UniProtKB" id="Q99732"/>
    </source>
</evidence>
<evidence type="ECO:0000250" key="2">
    <source>
        <dbReference type="UniProtKB" id="Q9H305"/>
    </source>
</evidence>
<evidence type="ECO:0000255" key="3">
    <source>
        <dbReference type="PROSITE-ProRule" id="PRU01181"/>
    </source>
</evidence>
<evidence type="ECO:0000256" key="4">
    <source>
        <dbReference type="SAM" id="MobiDB-lite"/>
    </source>
</evidence>
<evidence type="ECO:0000303" key="5">
    <source ref="2"/>
</evidence>
<evidence type="ECO:0000305" key="6"/>
<reference key="1">
    <citation type="journal article" date="2005" name="BMC Genomics">
        <title>Characterization of 954 bovine full-CDS cDNA sequences.</title>
        <authorList>
            <person name="Harhay G.P."/>
            <person name="Sonstegard T.S."/>
            <person name="Keele J.W."/>
            <person name="Heaton M.P."/>
            <person name="Clawson M.L."/>
            <person name="Snelling W.M."/>
            <person name="Wiedmann R.T."/>
            <person name="Van Tassell C.P."/>
            <person name="Smith T.P.L."/>
        </authorList>
    </citation>
    <scope>NUCLEOTIDE SEQUENCE [LARGE SCALE MRNA] (ISOFORM 1)</scope>
</reference>
<reference key="2">
    <citation type="submission" date="2005-08" db="EMBL/GenBank/DDBJ databases">
        <authorList>
            <consortium name="NIH - Mammalian Gene Collection (MGC) project"/>
        </authorList>
    </citation>
    <scope>NUCLEOTIDE SEQUENCE [LARGE SCALE MRNA] (ISOFORM 2)</scope>
    <source>
        <strain>Crossbred X Angus</strain>
        <tissue>Ileum</tissue>
    </source>
</reference>
<name>CDIP1_BOVIN</name>
<gene>
    <name type="primary">CDIP1</name>
</gene>
<organism>
    <name type="scientific">Bos taurus</name>
    <name type="common">Bovine</name>
    <dbReference type="NCBI Taxonomy" id="9913"/>
    <lineage>
        <taxon>Eukaryota</taxon>
        <taxon>Metazoa</taxon>
        <taxon>Chordata</taxon>
        <taxon>Craniata</taxon>
        <taxon>Vertebrata</taxon>
        <taxon>Euteleostomi</taxon>
        <taxon>Mammalia</taxon>
        <taxon>Eutheria</taxon>
        <taxon>Laurasiatheria</taxon>
        <taxon>Artiodactyla</taxon>
        <taxon>Ruminantia</taxon>
        <taxon>Pecora</taxon>
        <taxon>Bovidae</taxon>
        <taxon>Bovinae</taxon>
        <taxon>Bos</taxon>
    </lineage>
</organism>
<accession>Q58D45</accession>
<accession>Q3T0R0</accession>
<sequence>MSNDPPPPYPGGPTAPLLEEKSGAPPTPGRTSPAVMQPPPGMSLPPADIGPPPYEPPGHPMPQPGFIPPHVNADGTYMPSGFYPPPGPHPPMGYYPPGPYPPGPYAGPGGHTATVLVPSGAATTVTVLQGEIFEGAPVQTVCPHCQQAITTKISYEIGLMNFVLGFFCCFMGCDLGCCLIPCLINDFKDVTHTCPSCKAYIYTYKRLC</sequence>